<protein>
    <recommendedName>
        <fullName>TVP38/TMEM64 family membrane protein Mb0641c</fullName>
    </recommendedName>
</protein>
<evidence type="ECO:0000255" key="1"/>
<evidence type="ECO:0000305" key="2"/>
<keyword id="KW-1003">Cell membrane</keyword>
<keyword id="KW-0472">Membrane</keyword>
<keyword id="KW-1185">Reference proteome</keyword>
<keyword id="KW-0812">Transmembrane</keyword>
<keyword id="KW-1133">Transmembrane helix</keyword>
<organism>
    <name type="scientific">Mycobacterium bovis (strain ATCC BAA-935 / AF2122/97)</name>
    <dbReference type="NCBI Taxonomy" id="233413"/>
    <lineage>
        <taxon>Bacteria</taxon>
        <taxon>Bacillati</taxon>
        <taxon>Actinomycetota</taxon>
        <taxon>Actinomycetes</taxon>
        <taxon>Mycobacteriales</taxon>
        <taxon>Mycobacteriaceae</taxon>
        <taxon>Mycobacterium</taxon>
        <taxon>Mycobacterium tuberculosis complex</taxon>
    </lineage>
</organism>
<proteinExistence type="inferred from homology"/>
<accession>P67116</accession>
<accession>A0A1R3XVW7</accession>
<accession>P96915</accession>
<accession>X2BFN9</accession>
<feature type="chain" id="PRO_0000198637" description="TVP38/TMEM64 family membrane protein Mb0641c">
    <location>
        <begin position="1"/>
        <end position="246"/>
    </location>
</feature>
<feature type="transmembrane region" description="Helical" evidence="1">
    <location>
        <begin position="19"/>
        <end position="39"/>
    </location>
</feature>
<feature type="transmembrane region" description="Helical" evidence="1">
    <location>
        <begin position="57"/>
        <end position="77"/>
    </location>
</feature>
<feature type="transmembrane region" description="Helical" evidence="1">
    <location>
        <begin position="83"/>
        <end position="103"/>
    </location>
</feature>
<feature type="transmembrane region" description="Helical" evidence="1">
    <location>
        <begin position="157"/>
        <end position="177"/>
    </location>
</feature>
<feature type="transmembrane region" description="Helical" evidence="1">
    <location>
        <begin position="196"/>
        <end position="216"/>
    </location>
</feature>
<comment type="subcellular location">
    <subcellularLocation>
        <location evidence="2">Cell membrane</location>
        <topology evidence="2">Multi-pass membrane protein</topology>
    </subcellularLocation>
</comment>
<comment type="similarity">
    <text evidence="2">Belongs to the TVP38/TMEM64 family.</text>
</comment>
<reference key="1">
    <citation type="journal article" date="2003" name="Proc. Natl. Acad. Sci. U.S.A.">
        <title>The complete genome sequence of Mycobacterium bovis.</title>
        <authorList>
            <person name="Garnier T."/>
            <person name="Eiglmeier K."/>
            <person name="Camus J.-C."/>
            <person name="Medina N."/>
            <person name="Mansoor H."/>
            <person name="Pryor M."/>
            <person name="Duthoy S."/>
            <person name="Grondin S."/>
            <person name="Lacroix C."/>
            <person name="Monsempe C."/>
            <person name="Simon S."/>
            <person name="Harris B."/>
            <person name="Atkin R."/>
            <person name="Doggett J."/>
            <person name="Mayes R."/>
            <person name="Keating L."/>
            <person name="Wheeler P.R."/>
            <person name="Parkhill J."/>
            <person name="Barrell B.G."/>
            <person name="Cole S.T."/>
            <person name="Gordon S.V."/>
            <person name="Hewinson R.G."/>
        </authorList>
    </citation>
    <scope>NUCLEOTIDE SEQUENCE [LARGE SCALE GENOMIC DNA]</scope>
    <source>
        <strain>ATCC BAA-935 / AF2122/97</strain>
    </source>
</reference>
<reference key="2">
    <citation type="journal article" date="2017" name="Genome Announc.">
        <title>Updated reference genome sequence and annotation of Mycobacterium bovis AF2122/97.</title>
        <authorList>
            <person name="Malone K.M."/>
            <person name="Farrell D."/>
            <person name="Stuber T.P."/>
            <person name="Schubert O.T."/>
            <person name="Aebersold R."/>
            <person name="Robbe-Austerman S."/>
            <person name="Gordon S.V."/>
        </authorList>
    </citation>
    <scope>NUCLEOTIDE SEQUENCE [LARGE SCALE GENOMIC DNA]</scope>
    <scope>GENOME REANNOTATION</scope>
    <source>
        <strain>ATCC BAA-935 / AF2122/97</strain>
    </source>
</reference>
<dbReference type="EMBL" id="LT708304">
    <property type="protein sequence ID" value="SIT99239.1"/>
    <property type="molecule type" value="Genomic_DNA"/>
</dbReference>
<dbReference type="RefSeq" id="NP_854300.1">
    <property type="nucleotide sequence ID" value="NC_002945.3"/>
</dbReference>
<dbReference type="RefSeq" id="WP_003403239.1">
    <property type="nucleotide sequence ID" value="NC_002945.4"/>
</dbReference>
<dbReference type="KEGG" id="mbo:BQ2027_MB0641C"/>
<dbReference type="PATRIC" id="fig|233413.5.peg.701"/>
<dbReference type="Proteomes" id="UP000001419">
    <property type="component" value="Chromosome"/>
</dbReference>
<dbReference type="GO" id="GO:0005886">
    <property type="term" value="C:plasma membrane"/>
    <property type="evidence" value="ECO:0007669"/>
    <property type="project" value="UniProtKB-SubCell"/>
</dbReference>
<dbReference type="InterPro" id="IPR015414">
    <property type="entry name" value="TMEM64"/>
</dbReference>
<dbReference type="InterPro" id="IPR032816">
    <property type="entry name" value="VTT_dom"/>
</dbReference>
<dbReference type="PANTHER" id="PTHR12677">
    <property type="entry name" value="GOLGI APPARATUS MEMBRANE PROTEIN TVP38-RELATED"/>
    <property type="match status" value="1"/>
</dbReference>
<dbReference type="PANTHER" id="PTHR12677:SF58">
    <property type="entry name" value="TVP38_TMEM64 FAMILY MEMBRANE PROTEIN RV0625C"/>
    <property type="match status" value="1"/>
</dbReference>
<dbReference type="Pfam" id="PF09335">
    <property type="entry name" value="VTT_dom"/>
    <property type="match status" value="1"/>
</dbReference>
<sequence>MSTHNDSAPTSRRRHIVRLVVFAGFLVGMFYLVAATDVIDVAAVRGAVSATGPAAPLTYVVVSAVLGALFVPGPILAASSGLLFGPLVGVFVTLGATVGTAVVASLVGRRAGRASARALLGGERADRTDALIERCGLWAVVGQRFVPGISDAFASYAFGTFGVPLWQMAVGAFIGSAPRAFAYTALGAAIGDRSPLLASCAIAVWCVTAIIGAFAARHGYRQWRAHARGDGADGGVEDPDREVGAR</sequence>
<gene>
    <name type="ordered locus">BQ2027_MB0641C</name>
</gene>
<name>Y641_MYCBO</name>